<sequence>MNRLPSSASALACTAHALNLIEKRTLDHEEMKQLNREVIDYFKEHVNPGFLEYRKSVTAGGDYGAVEWQAGSLNTLVDTQGQEFIDCLGGFGIFNVGHRNPVVVSAVQNQLAKQPLHSQELLDPLRAMLAKTLAALTPGKLKYSFFSNSGTESVEAALKLAKAYQSPRGKFTFIATSGAFHGKSLGALSATAKSTFRKPFMPLLPGFRHVPFGDINAMRTMLTECRKTGDDVAAVILEPIQGEGGVILPPLGYLPAVRKLCDEFDALLILDEVQTGMGRTGKMFACEHENVQPDILCLAKALGGGVMPIGATVATEEVFSVLFDNPFLHTTTFGGNPLSCAAALATINVLLEQNLPAQAEQKGDMLLDGFLQLGREYPDLVQDARGKGMLIAIEFVDNEIGYSFASEMFRQRILVAGTLNNSKTIRIEPPLTLTIEQCEQVLKATRTALAALRVSVEEA</sequence>
<evidence type="ECO:0000255" key="1">
    <source>
        <dbReference type="HAMAP-Rule" id="MF_01276"/>
    </source>
</evidence>
<feature type="chain" id="PRO_1000067397" description="Putrescine aminotransferase">
    <location>
        <begin position="1"/>
        <end position="459"/>
    </location>
</feature>
<feature type="binding site" description="in other chain" evidence="1">
    <location>
        <begin position="150"/>
        <end position="151"/>
    </location>
    <ligand>
        <name>pyridoxal 5'-phosphate</name>
        <dbReference type="ChEBI" id="CHEBI:597326"/>
        <note>ligand shared between dimeric partners</note>
    </ligand>
</feature>
<feature type="binding site" description="in other chain" evidence="1">
    <location>
        <position position="274"/>
    </location>
    <ligand>
        <name>pyridoxal 5'-phosphate</name>
        <dbReference type="ChEBI" id="CHEBI:597326"/>
        <note>ligand shared between dimeric partners</note>
    </ligand>
</feature>
<feature type="binding site" evidence="1">
    <location>
        <position position="332"/>
    </location>
    <ligand>
        <name>pyridoxal 5'-phosphate</name>
        <dbReference type="ChEBI" id="CHEBI:597326"/>
        <note>ligand shared between dimeric partners</note>
    </ligand>
</feature>
<feature type="modified residue" description="N6-(pyridoxal phosphate)lysine" evidence="1">
    <location>
        <position position="300"/>
    </location>
</feature>
<protein>
    <recommendedName>
        <fullName evidence="1">Putrescine aminotransferase</fullName>
        <shortName evidence="1">PAT</shortName>
        <shortName evidence="1">PATase</shortName>
        <ecNumber evidence="1">2.6.1.82</ecNumber>
    </recommendedName>
    <alternativeName>
        <fullName evidence="1">Cadaverine transaminase</fullName>
    </alternativeName>
    <alternativeName>
        <fullName evidence="1">Diamine transaminase</fullName>
        <ecNumber evidence="1">2.6.1.29</ecNumber>
    </alternativeName>
    <alternativeName>
        <fullName evidence="1">Putrescine transaminase</fullName>
    </alternativeName>
    <alternativeName>
        <fullName evidence="1">Putrescine--2-oxoglutaric acid transaminase</fullName>
    </alternativeName>
</protein>
<gene>
    <name evidence="1" type="primary">patA</name>
    <name type="ordered locus">Ent638_3528</name>
</gene>
<organism>
    <name type="scientific">Enterobacter sp. (strain 638)</name>
    <dbReference type="NCBI Taxonomy" id="399742"/>
    <lineage>
        <taxon>Bacteria</taxon>
        <taxon>Pseudomonadati</taxon>
        <taxon>Pseudomonadota</taxon>
        <taxon>Gammaproteobacteria</taxon>
        <taxon>Enterobacterales</taxon>
        <taxon>Enterobacteriaceae</taxon>
        <taxon>Enterobacter</taxon>
    </lineage>
</organism>
<comment type="function">
    <text evidence="1">Catalyzes the aminotransferase reaction from putrescine to 2-oxoglutarate, leading to glutamate and 4-aminobutanal, which spontaneously cyclizes to form 1-pyrroline. This is the first step in one of two pathways for putrescine degradation, where putrescine is converted into 4-aminobutanoate (gamma-aminobutyrate or GABA) via 4-aminobutanal. Also functions as a cadaverine transaminase in a a L-lysine degradation pathway to succinate that proceeds via cadaverine, glutarate and L-2-hydroxyglutarate.</text>
</comment>
<comment type="catalytic activity">
    <reaction evidence="1">
        <text>an alkane-alpha,omega-diamine + 2-oxoglutarate = an omega-aminoaldehyde + L-glutamate</text>
        <dbReference type="Rhea" id="RHEA:18217"/>
        <dbReference type="Rhea" id="RHEA-COMP:9766"/>
        <dbReference type="Rhea" id="RHEA-COMP:12750"/>
        <dbReference type="ChEBI" id="CHEBI:16810"/>
        <dbReference type="ChEBI" id="CHEBI:29985"/>
        <dbReference type="ChEBI" id="CHEBI:70977"/>
        <dbReference type="ChEBI" id="CHEBI:133427"/>
        <dbReference type="EC" id="2.6.1.29"/>
    </reaction>
    <physiologicalReaction direction="left-to-right" evidence="1">
        <dbReference type="Rhea" id="RHEA:18218"/>
    </physiologicalReaction>
</comment>
<comment type="catalytic activity">
    <reaction evidence="1">
        <text>putrescine + 2-oxoglutarate = 1-pyrroline + L-glutamate + H2O</text>
        <dbReference type="Rhea" id="RHEA:12268"/>
        <dbReference type="ChEBI" id="CHEBI:15377"/>
        <dbReference type="ChEBI" id="CHEBI:16810"/>
        <dbReference type="ChEBI" id="CHEBI:29985"/>
        <dbReference type="ChEBI" id="CHEBI:36781"/>
        <dbReference type="ChEBI" id="CHEBI:326268"/>
        <dbReference type="EC" id="2.6.1.82"/>
    </reaction>
    <physiologicalReaction direction="left-to-right" evidence="1">
        <dbReference type="Rhea" id="RHEA:12269"/>
    </physiologicalReaction>
</comment>
<comment type="catalytic activity">
    <reaction evidence="1">
        <text>cadaverine + 2-oxoglutarate = 5-aminopentanal + L-glutamate</text>
        <dbReference type="Rhea" id="RHEA:61624"/>
        <dbReference type="ChEBI" id="CHEBI:16810"/>
        <dbReference type="ChEBI" id="CHEBI:29985"/>
        <dbReference type="ChEBI" id="CHEBI:58384"/>
        <dbReference type="ChEBI" id="CHEBI:144896"/>
    </reaction>
    <physiologicalReaction direction="left-to-right" evidence="1">
        <dbReference type="Rhea" id="RHEA:61625"/>
    </physiologicalReaction>
</comment>
<comment type="cofactor">
    <cofactor evidence="1">
        <name>pyridoxal 5'-phosphate</name>
        <dbReference type="ChEBI" id="CHEBI:597326"/>
    </cofactor>
</comment>
<comment type="pathway">
    <text evidence="1">Amine and polyamine degradation; putrescine degradation; 4-aminobutanal from putrescine (transaminase route): step 1/1.</text>
</comment>
<comment type="similarity">
    <text evidence="1">Belongs to the class-III pyridoxal-phosphate-dependent aminotransferase family. Putrescine aminotransferase subfamily.</text>
</comment>
<keyword id="KW-0032">Aminotransferase</keyword>
<keyword id="KW-0663">Pyridoxal phosphate</keyword>
<keyword id="KW-0808">Transferase</keyword>
<reference key="1">
    <citation type="journal article" date="2010" name="PLoS Genet.">
        <title>Genome sequence of the plant growth promoting endophytic bacterium Enterobacter sp. 638.</title>
        <authorList>
            <person name="Taghavi S."/>
            <person name="van der Lelie D."/>
            <person name="Hoffman A."/>
            <person name="Zhang Y.B."/>
            <person name="Walla M.D."/>
            <person name="Vangronsveld J."/>
            <person name="Newman L."/>
            <person name="Monchy S."/>
        </authorList>
    </citation>
    <scope>NUCLEOTIDE SEQUENCE [LARGE SCALE GENOMIC DNA]</scope>
    <source>
        <strain>638</strain>
    </source>
</reference>
<dbReference type="EC" id="2.6.1.82" evidence="1"/>
<dbReference type="EC" id="2.6.1.29" evidence="1"/>
<dbReference type="EMBL" id="CP000653">
    <property type="protein sequence ID" value="ABP62186.1"/>
    <property type="molecule type" value="Genomic_DNA"/>
</dbReference>
<dbReference type="RefSeq" id="WP_015960512.1">
    <property type="nucleotide sequence ID" value="NC_009436.1"/>
</dbReference>
<dbReference type="SMR" id="A4WEQ6"/>
<dbReference type="STRING" id="399742.Ent638_3528"/>
<dbReference type="KEGG" id="ent:Ent638_3528"/>
<dbReference type="eggNOG" id="COG4992">
    <property type="taxonomic scope" value="Bacteria"/>
</dbReference>
<dbReference type="HOGENOM" id="CLU_016922_10_0_6"/>
<dbReference type="UniPathway" id="UPA00188">
    <property type="reaction ID" value="UER00290"/>
</dbReference>
<dbReference type="Proteomes" id="UP000000230">
    <property type="component" value="Chromosome"/>
</dbReference>
<dbReference type="GO" id="GO:0019161">
    <property type="term" value="F:diamine transaminase activity"/>
    <property type="evidence" value="ECO:0007669"/>
    <property type="project" value="UniProtKB-EC"/>
</dbReference>
<dbReference type="GO" id="GO:0042802">
    <property type="term" value="F:identical protein binding"/>
    <property type="evidence" value="ECO:0007669"/>
    <property type="project" value="TreeGrafter"/>
</dbReference>
<dbReference type="GO" id="GO:0033094">
    <property type="term" value="F:putrescine--2-oxoglutarate transaminase activity"/>
    <property type="evidence" value="ECO:0007669"/>
    <property type="project" value="UniProtKB-UniRule"/>
</dbReference>
<dbReference type="GO" id="GO:0030170">
    <property type="term" value="F:pyridoxal phosphate binding"/>
    <property type="evidence" value="ECO:0007669"/>
    <property type="project" value="UniProtKB-UniRule"/>
</dbReference>
<dbReference type="GO" id="GO:0019477">
    <property type="term" value="P:L-lysine catabolic process"/>
    <property type="evidence" value="ECO:0007669"/>
    <property type="project" value="UniProtKB-UniRule"/>
</dbReference>
<dbReference type="GO" id="GO:0009447">
    <property type="term" value="P:putrescine catabolic process"/>
    <property type="evidence" value="ECO:0007669"/>
    <property type="project" value="UniProtKB-UniRule"/>
</dbReference>
<dbReference type="CDD" id="cd00610">
    <property type="entry name" value="OAT_like"/>
    <property type="match status" value="1"/>
</dbReference>
<dbReference type="FunFam" id="3.40.640.10:FF:000004">
    <property type="entry name" value="Acetylornithine aminotransferase"/>
    <property type="match status" value="1"/>
</dbReference>
<dbReference type="Gene3D" id="3.90.1150.10">
    <property type="entry name" value="Aspartate Aminotransferase, domain 1"/>
    <property type="match status" value="1"/>
</dbReference>
<dbReference type="Gene3D" id="3.40.640.10">
    <property type="entry name" value="Type I PLP-dependent aspartate aminotransferase-like (Major domain)"/>
    <property type="match status" value="1"/>
</dbReference>
<dbReference type="HAMAP" id="MF_01276">
    <property type="entry name" value="Putres_aminotrans_3"/>
    <property type="match status" value="1"/>
</dbReference>
<dbReference type="InterPro" id="IPR005814">
    <property type="entry name" value="Aminotrans_3"/>
</dbReference>
<dbReference type="InterPro" id="IPR049704">
    <property type="entry name" value="Aminotrans_3_PPA_site"/>
</dbReference>
<dbReference type="InterPro" id="IPR050103">
    <property type="entry name" value="Class-III_PLP-dep_AT"/>
</dbReference>
<dbReference type="InterPro" id="IPR017747">
    <property type="entry name" value="Putrescine_aminotransferase"/>
</dbReference>
<dbReference type="InterPro" id="IPR015424">
    <property type="entry name" value="PyrdxlP-dep_Trfase"/>
</dbReference>
<dbReference type="InterPro" id="IPR015421">
    <property type="entry name" value="PyrdxlP-dep_Trfase_major"/>
</dbReference>
<dbReference type="InterPro" id="IPR015422">
    <property type="entry name" value="PyrdxlP-dep_Trfase_small"/>
</dbReference>
<dbReference type="NCBIfam" id="NF008570">
    <property type="entry name" value="PRK11522.1"/>
    <property type="match status" value="1"/>
</dbReference>
<dbReference type="NCBIfam" id="TIGR03372">
    <property type="entry name" value="putres_am_tran"/>
    <property type="match status" value="1"/>
</dbReference>
<dbReference type="PANTHER" id="PTHR11986">
    <property type="entry name" value="AMINOTRANSFERASE CLASS III"/>
    <property type="match status" value="1"/>
</dbReference>
<dbReference type="PANTHER" id="PTHR11986:SF112">
    <property type="entry name" value="PUTRESCINE AMINOTRANSFERASE"/>
    <property type="match status" value="1"/>
</dbReference>
<dbReference type="Pfam" id="PF00202">
    <property type="entry name" value="Aminotran_3"/>
    <property type="match status" value="1"/>
</dbReference>
<dbReference type="PIRSF" id="PIRSF000521">
    <property type="entry name" value="Transaminase_4ab_Lys_Orn"/>
    <property type="match status" value="1"/>
</dbReference>
<dbReference type="SUPFAM" id="SSF53383">
    <property type="entry name" value="PLP-dependent transferases"/>
    <property type="match status" value="1"/>
</dbReference>
<dbReference type="PROSITE" id="PS00600">
    <property type="entry name" value="AA_TRANSFER_CLASS_3"/>
    <property type="match status" value="1"/>
</dbReference>
<name>PAT_ENT38</name>
<accession>A4WEQ6</accession>
<proteinExistence type="inferred from homology"/>